<reference key="1">
    <citation type="journal article" date="1989" name="Proc. Natl. Acad. Sci. U.S.A.">
        <title>Molecular cloning, characterization, and expression of human ADP-ribosylation factors: two guanine nucleotide-dependent activators of cholera toxin.</title>
        <authorList>
            <person name="Bobak D.A."/>
            <person name="Nightingale M.S."/>
            <person name="Murtagh J.J. Jr."/>
            <person name="Price S.R."/>
            <person name="Moss J."/>
            <person name="Vaughan M."/>
        </authorList>
    </citation>
    <scope>NUCLEOTIDE SEQUENCE [MRNA]</scope>
</reference>
<reference key="2">
    <citation type="journal article" date="1991" name="J. Biol. Chem.">
        <title>Human ADP-ribosylation factors. A functionally conserved family of GTP-binding proteins.</title>
        <authorList>
            <person name="Kahn R.A."/>
            <person name="Kern F.G."/>
            <person name="Clark J."/>
            <person name="Gelmann E.P."/>
            <person name="Rulka C."/>
        </authorList>
    </citation>
    <scope>NUCLEOTIDE SEQUENCE [MRNA]</scope>
</reference>
<reference key="3">
    <citation type="journal article" date="1992" name="J. Biol. Chem.">
        <title>Characterization of the human gene encoding ADP-ribosylation factor 1, a guanine nucleotide-binding activator of cholera toxin.</title>
        <authorList>
            <person name="Lee C.M."/>
            <person name="Haun R.S."/>
            <person name="Tsai S.C."/>
            <person name="Moss J."/>
            <person name="Vaughan M."/>
        </authorList>
    </citation>
    <scope>NUCLEOTIDE SEQUENCE [GENOMIC DNA]</scope>
</reference>
<reference key="4">
    <citation type="journal article" date="1997" name="Genome Res.">
        <title>Large-scale concatenation cDNA sequencing.</title>
        <authorList>
            <person name="Yu W."/>
            <person name="Andersson B."/>
            <person name="Worley K.C."/>
            <person name="Muzny D.M."/>
            <person name="Ding Y."/>
            <person name="Liu W."/>
            <person name="Ricafrente J.Y."/>
            <person name="Wentland M.A."/>
            <person name="Lennon G."/>
            <person name="Gibbs R.A."/>
        </authorList>
    </citation>
    <scope>NUCLEOTIDE SEQUENCE [LARGE SCALE MRNA]</scope>
    <source>
        <tissue>Brain</tissue>
    </source>
</reference>
<reference key="5">
    <citation type="submission" date="2002-03" db="EMBL/GenBank/DDBJ databases">
        <title>cDNA clones of human proteins involved in signal transduction sequenced by the Guthrie cDNA resource center (www.cdna.org).</title>
        <authorList>
            <person name="Puhl H.L. III"/>
            <person name="Ikeda S.R."/>
            <person name="Aronstam R.S."/>
        </authorList>
    </citation>
    <scope>NUCLEOTIDE SEQUENCE [LARGE SCALE MRNA]</scope>
    <source>
        <tissue>Brain</tissue>
    </source>
</reference>
<reference key="6">
    <citation type="submission" date="2003-05" db="EMBL/GenBank/DDBJ databases">
        <title>Cloning of human full-length CDSs in BD Creator(TM) system donor vector.</title>
        <authorList>
            <person name="Kalnine N."/>
            <person name="Chen X."/>
            <person name="Rolfs A."/>
            <person name="Halleck A."/>
            <person name="Hines L."/>
            <person name="Eisenstein S."/>
            <person name="Koundinya M."/>
            <person name="Raphael J."/>
            <person name="Moreira D."/>
            <person name="Kelley T."/>
            <person name="LaBaer J."/>
            <person name="Lin Y."/>
            <person name="Phelan M."/>
            <person name="Farmer A."/>
        </authorList>
    </citation>
    <scope>NUCLEOTIDE SEQUENCE [LARGE SCALE MRNA]</scope>
</reference>
<reference key="7">
    <citation type="journal article" date="2006" name="Nature">
        <title>The DNA sequence and biological annotation of human chromosome 1.</title>
        <authorList>
            <person name="Gregory S.G."/>
            <person name="Barlow K.F."/>
            <person name="McLay K.E."/>
            <person name="Kaul R."/>
            <person name="Swarbreck D."/>
            <person name="Dunham A."/>
            <person name="Scott C.E."/>
            <person name="Howe K.L."/>
            <person name="Woodfine K."/>
            <person name="Spencer C.C.A."/>
            <person name="Jones M.C."/>
            <person name="Gillson C."/>
            <person name="Searle S."/>
            <person name="Zhou Y."/>
            <person name="Kokocinski F."/>
            <person name="McDonald L."/>
            <person name="Evans R."/>
            <person name="Phillips K."/>
            <person name="Atkinson A."/>
            <person name="Cooper R."/>
            <person name="Jones C."/>
            <person name="Hall R.E."/>
            <person name="Andrews T.D."/>
            <person name="Lloyd C."/>
            <person name="Ainscough R."/>
            <person name="Almeida J.P."/>
            <person name="Ambrose K.D."/>
            <person name="Anderson F."/>
            <person name="Andrew R.W."/>
            <person name="Ashwell R.I.S."/>
            <person name="Aubin K."/>
            <person name="Babbage A.K."/>
            <person name="Bagguley C.L."/>
            <person name="Bailey J."/>
            <person name="Beasley H."/>
            <person name="Bethel G."/>
            <person name="Bird C.P."/>
            <person name="Bray-Allen S."/>
            <person name="Brown J.Y."/>
            <person name="Brown A.J."/>
            <person name="Buckley D."/>
            <person name="Burton J."/>
            <person name="Bye J."/>
            <person name="Carder C."/>
            <person name="Chapman J.C."/>
            <person name="Clark S.Y."/>
            <person name="Clarke G."/>
            <person name="Clee C."/>
            <person name="Cobley V."/>
            <person name="Collier R.E."/>
            <person name="Corby N."/>
            <person name="Coville G.J."/>
            <person name="Davies J."/>
            <person name="Deadman R."/>
            <person name="Dunn M."/>
            <person name="Earthrowl M."/>
            <person name="Ellington A.G."/>
            <person name="Errington H."/>
            <person name="Frankish A."/>
            <person name="Frankland J."/>
            <person name="French L."/>
            <person name="Garner P."/>
            <person name="Garnett J."/>
            <person name="Gay L."/>
            <person name="Ghori M.R.J."/>
            <person name="Gibson R."/>
            <person name="Gilby L.M."/>
            <person name="Gillett W."/>
            <person name="Glithero R.J."/>
            <person name="Grafham D.V."/>
            <person name="Griffiths C."/>
            <person name="Griffiths-Jones S."/>
            <person name="Grocock R."/>
            <person name="Hammond S."/>
            <person name="Harrison E.S.I."/>
            <person name="Hart E."/>
            <person name="Haugen E."/>
            <person name="Heath P.D."/>
            <person name="Holmes S."/>
            <person name="Holt K."/>
            <person name="Howden P.J."/>
            <person name="Hunt A.R."/>
            <person name="Hunt S.E."/>
            <person name="Hunter G."/>
            <person name="Isherwood J."/>
            <person name="James R."/>
            <person name="Johnson C."/>
            <person name="Johnson D."/>
            <person name="Joy A."/>
            <person name="Kay M."/>
            <person name="Kershaw J.K."/>
            <person name="Kibukawa M."/>
            <person name="Kimberley A.M."/>
            <person name="King A."/>
            <person name="Knights A.J."/>
            <person name="Lad H."/>
            <person name="Laird G."/>
            <person name="Lawlor S."/>
            <person name="Leongamornlert D.A."/>
            <person name="Lloyd D.M."/>
            <person name="Loveland J."/>
            <person name="Lovell J."/>
            <person name="Lush M.J."/>
            <person name="Lyne R."/>
            <person name="Martin S."/>
            <person name="Mashreghi-Mohammadi M."/>
            <person name="Matthews L."/>
            <person name="Matthews N.S.W."/>
            <person name="McLaren S."/>
            <person name="Milne S."/>
            <person name="Mistry S."/>
            <person name="Moore M.J.F."/>
            <person name="Nickerson T."/>
            <person name="O'Dell C.N."/>
            <person name="Oliver K."/>
            <person name="Palmeiri A."/>
            <person name="Palmer S.A."/>
            <person name="Parker A."/>
            <person name="Patel D."/>
            <person name="Pearce A.V."/>
            <person name="Peck A.I."/>
            <person name="Pelan S."/>
            <person name="Phelps K."/>
            <person name="Phillimore B.J."/>
            <person name="Plumb R."/>
            <person name="Rajan J."/>
            <person name="Raymond C."/>
            <person name="Rouse G."/>
            <person name="Saenphimmachak C."/>
            <person name="Sehra H.K."/>
            <person name="Sheridan E."/>
            <person name="Shownkeen R."/>
            <person name="Sims S."/>
            <person name="Skuce C.D."/>
            <person name="Smith M."/>
            <person name="Steward C."/>
            <person name="Subramanian S."/>
            <person name="Sycamore N."/>
            <person name="Tracey A."/>
            <person name="Tromans A."/>
            <person name="Van Helmond Z."/>
            <person name="Wall M."/>
            <person name="Wallis J.M."/>
            <person name="White S."/>
            <person name="Whitehead S.L."/>
            <person name="Wilkinson J.E."/>
            <person name="Willey D.L."/>
            <person name="Williams H."/>
            <person name="Wilming L."/>
            <person name="Wray P.W."/>
            <person name="Wu Z."/>
            <person name="Coulson A."/>
            <person name="Vaudin M."/>
            <person name="Sulston J.E."/>
            <person name="Durbin R.M."/>
            <person name="Hubbard T."/>
            <person name="Wooster R."/>
            <person name="Dunham I."/>
            <person name="Carter N.P."/>
            <person name="McVean G."/>
            <person name="Ross M.T."/>
            <person name="Harrow J."/>
            <person name="Olson M.V."/>
            <person name="Beck S."/>
            <person name="Rogers J."/>
            <person name="Bentley D.R."/>
        </authorList>
    </citation>
    <scope>NUCLEOTIDE SEQUENCE [LARGE SCALE GENOMIC DNA]</scope>
</reference>
<reference key="8">
    <citation type="journal article" date="2004" name="Genome Res.">
        <title>The status, quality, and expansion of the NIH full-length cDNA project: the Mammalian Gene Collection (MGC).</title>
        <authorList>
            <consortium name="The MGC Project Team"/>
        </authorList>
    </citation>
    <scope>NUCLEOTIDE SEQUENCE [LARGE SCALE MRNA]</scope>
    <source>
        <tissue>Cervix</tissue>
        <tissue>Eye</tissue>
        <tissue>Kidney</tissue>
    </source>
</reference>
<reference key="9">
    <citation type="submission" date="2008-12" db="UniProtKB">
        <authorList>
            <person name="Lubec G."/>
            <person name="Chen W.-Q."/>
            <person name="Sun Y."/>
        </authorList>
    </citation>
    <scope>PROTEIN SEQUENCE OF 20-30; 80-97 AND 118-142</scope>
    <scope>IDENTIFICATION BY MASS SPECTROMETRY</scope>
    <source>
        <tissue>Fetal brain cortex</tissue>
    </source>
</reference>
<reference key="10">
    <citation type="journal article" date="1993" name="J. Cell Biol.">
        <title>Hydrolysis of bound GTP by ARF protein triggers uncoating of Golgi-derived COP-coated vesicles.</title>
        <authorList>
            <person name="Tanigawa G."/>
            <person name="Orci L."/>
            <person name="Amherdt M."/>
            <person name="Ravazzola M."/>
            <person name="Helms J.B."/>
            <person name="Rothman J.E."/>
        </authorList>
    </citation>
    <scope>FUNCTION</scope>
    <scope>CATALYTIC ACTIVITY</scope>
    <scope>MUTAGENESIS OF GLN-71</scope>
</reference>
<reference key="11">
    <citation type="journal article" date="1996" name="EMBO J.">
        <title>p619, a giant protein related to the chromosome condensation regulator RCC1, stimulates guanine nucleotide exchange on ARF1 and Rab proteins.</title>
        <authorList>
            <person name="Rosa J.L."/>
            <person name="Casaroli-Marano R.P."/>
            <person name="Buckler A.J."/>
            <person name="Vilaro S."/>
            <person name="Barbacid M."/>
        </authorList>
    </citation>
    <scope>INTERACTION WITH HERC1</scope>
    <scope>SUBCELLULAR LOCATION</scope>
</reference>
<reference key="12">
    <citation type="journal article" date="1999" name="Mol. Cell. Biol.">
        <title>Identification of a new Pyk2 target protein with Arf-GAP activity.</title>
        <authorList>
            <person name="Andreev J."/>
            <person name="Simon J.-P."/>
            <person name="Sabatini D.D."/>
            <person name="Kam J."/>
            <person name="Plowman G."/>
            <person name="Randazzo P.A."/>
            <person name="Schlessinger J."/>
        </authorList>
    </citation>
    <scope>CATALYTIC ACTIVITY</scope>
    <scope>ACTIVITY REGULATION</scope>
    <scope>INTERACTION WITH ASAP2</scope>
</reference>
<reference key="13">
    <citation type="journal article" date="2002" name="Biochem. J.">
        <title>GGA proteins associate with Golgi membranes through interaction between their GGAH domains and ADP-ribosylation factors.</title>
        <authorList>
            <person name="Takatsu H."/>
            <person name="Yoshino K."/>
            <person name="Toda K."/>
            <person name="Nakayama K."/>
        </authorList>
    </citation>
    <scope>INTERACTION WITH GGA1; GGA2 AND GGA3</scope>
</reference>
<reference key="14">
    <citation type="journal article" date="2004" name="Nat. Cell Biol.">
        <title>FAPPs control Golgi-to-cell-surface membrane traffic by binding to ARF and PtdIns(4)P.</title>
        <authorList>
            <person name="Godi A."/>
            <person name="Di Campli A."/>
            <person name="Konstantakopoulos A."/>
            <person name="Di Tullio G."/>
            <person name="Alessi D.R."/>
            <person name="Kular G.S."/>
            <person name="Daniele T."/>
            <person name="Marra P."/>
            <person name="Lucocq J.M."/>
            <person name="De Matteis M.A."/>
        </authorList>
    </citation>
    <scope>CATALYTIC ACTIVITY</scope>
    <scope>ACTIVITY REGULATION</scope>
    <scope>INTERACTION WITH PLEKHA8</scope>
</reference>
<reference key="15">
    <citation type="journal article" date="2007" name="EMBO J.">
        <title>Structural basis for ARF1-mediated recruitment of ARHGAP21 to Golgi membranes.</title>
        <authorList>
            <person name="Menetrey J."/>
            <person name="Perderiset M."/>
            <person name="Cicolari J."/>
            <person name="Dubois T."/>
            <person name="Elkhatib N."/>
            <person name="El Khadali F."/>
            <person name="Franco M."/>
            <person name="Chavrier P."/>
            <person name="Houdusse A."/>
        </authorList>
    </citation>
    <scope>INTERACTION WITH ARHGAP21</scope>
</reference>
<reference key="16">
    <citation type="journal article" date="2007" name="Traffic">
        <title>Specificity, promiscuity and localization of ARF protein interactions with NCS-1 and phosphatidylinositol-4 kinase-III beta.</title>
        <authorList>
            <person name="Haynes L.P."/>
            <person name="Sherwood M.W."/>
            <person name="Dolman N.J."/>
            <person name="Burgoyne R.D."/>
        </authorList>
    </citation>
    <scope>INTERACTION WITH PI4KB AND NCS1</scope>
</reference>
<reference key="17">
    <citation type="journal article" date="2009" name="Anal. Chem.">
        <title>Lys-N and trypsin cover complementary parts of the phosphoproteome in a refined SCX-based approach.</title>
        <authorList>
            <person name="Gauci S."/>
            <person name="Helbig A.O."/>
            <person name="Slijper M."/>
            <person name="Krijgsveld J."/>
            <person name="Heck A.J."/>
            <person name="Mohammed S."/>
        </authorList>
    </citation>
    <scope>ACETYLATION [LARGE SCALE ANALYSIS] AT GLY-2</scope>
    <scope>CLEAVAGE OF INITIATOR METHIONINE [LARGE SCALE ANALYSIS]</scope>
    <scope>IDENTIFICATION BY MASS SPECTROMETRY [LARGE SCALE ANALYSIS]</scope>
</reference>
<reference key="18">
    <citation type="journal article" date="2010" name="Proteomics">
        <title>Strategy for comprehensive identification of human N-myristoylated proteins using an insect cell-free protein synthesis system.</title>
        <authorList>
            <person name="Suzuki T."/>
            <person name="Moriya K."/>
            <person name="Nagatoshi K."/>
            <person name="Ota Y."/>
            <person name="Ezure T."/>
            <person name="Ando E."/>
            <person name="Tsunasawa S."/>
            <person name="Utsumi T."/>
        </authorList>
    </citation>
    <scope>MYRISTOYLATION AT GLY-2</scope>
</reference>
<reference key="19">
    <citation type="journal article" date="2011" name="BMC Syst. Biol.">
        <title>Initial characterization of the human central proteome.</title>
        <authorList>
            <person name="Burkard T.R."/>
            <person name="Planyavsky M."/>
            <person name="Kaupe I."/>
            <person name="Breitwieser F.P."/>
            <person name="Buerckstuemmer T."/>
            <person name="Bennett K.L."/>
            <person name="Superti-Furga G."/>
            <person name="Colinge J."/>
        </authorList>
    </citation>
    <scope>IDENTIFICATION BY MASS SPECTROMETRY [LARGE SCALE ANALYSIS]</scope>
</reference>
<reference key="20">
    <citation type="journal article" date="2011" name="J. Biol. Chem.">
        <title>Molecular basis of phosphatidylinositol 4-phosphate and ARF1 GTPase recognition by the FAPP1 pleckstrin homology (PH) domain.</title>
        <authorList>
            <person name="He J."/>
            <person name="Scott J.L."/>
            <person name="Heroux A."/>
            <person name="Roy S."/>
            <person name="Lenoir M."/>
            <person name="Overduin M."/>
            <person name="Stahelin R.V."/>
            <person name="Kutateladze T.G."/>
        </authorList>
    </citation>
    <scope>INTERACTION WITH PLEKHA3</scope>
</reference>
<reference key="21">
    <citation type="journal article" date="2012" name="Mol. Cell. Proteomics">
        <title>Comparative large-scale characterisation of plant vs. mammal proteins reveals similar and idiosyncratic N-alpha acetylation features.</title>
        <authorList>
            <person name="Bienvenut W.V."/>
            <person name="Sumpton D."/>
            <person name="Martinez A."/>
            <person name="Lilla S."/>
            <person name="Espagne C."/>
            <person name="Meinnel T."/>
            <person name="Giglione C."/>
        </authorList>
    </citation>
    <scope>ACETYLATION [LARGE SCALE ANALYSIS] AT GLY-2</scope>
    <scope>CLEAVAGE OF INITIATOR METHIONINE [LARGE SCALE ANALYSIS]</scope>
    <scope>IDENTIFICATION BY MASS SPECTROMETRY [LARGE SCALE ANALYSIS]</scope>
</reference>
<reference key="22">
    <citation type="journal article" date="2013" name="Nature">
        <title>Proteolytic elimination of N-myristoyl modifications by the Shigella virulence factor IpaJ.</title>
        <authorList>
            <person name="Burnaevskiy N."/>
            <person name="Fox T.G."/>
            <person name="Plymire D.A."/>
            <person name="Ertelt J.M."/>
            <person name="Weigele B.A."/>
            <person name="Selyunin A.S."/>
            <person name="Way S.S."/>
            <person name="Patrie S.M."/>
            <person name="Alto N.M."/>
        </authorList>
    </citation>
    <scope>MYRISTOYLATION AT GLY-2</scope>
    <scope>DEMYRISTOYLATION</scope>
</reference>
<reference key="23">
    <citation type="journal article" date="2013" name="Neuron">
        <title>The small GTPase Arf1 modulates Arp2/3-mediated actin polymerization via PICK1 to regulate synaptic plasticity.</title>
        <authorList>
            <person name="Rocca D.L."/>
            <person name="Amici M."/>
            <person name="Antoniou A."/>
            <person name="Suarez E.B."/>
            <person name="Halemani N."/>
            <person name="Murk K."/>
            <person name="McGarvey J."/>
            <person name="Jaafari N."/>
            <person name="Mellor J.R."/>
            <person name="Collingridge G.L."/>
            <person name="Hanley J.G."/>
        </authorList>
    </citation>
    <scope>INTERACTION WITH PICK1 AND GRIA2</scope>
</reference>
<reference key="24">
    <citation type="journal article" date="2013" name="PLoS Biol.">
        <title>Integrated conformational and lipid-sensing regulation of endosomal ArfGEF BRAG2.</title>
        <authorList>
            <person name="Aizel K."/>
            <person name="Biou V."/>
            <person name="Navaza J."/>
            <person name="Duarte L.V."/>
            <person name="Campanacci V."/>
            <person name="Cherfils J."/>
            <person name="Zeghouf M."/>
        </authorList>
    </citation>
    <scope>INTERACTION WITH IQSEC1</scope>
</reference>
<reference key="25">
    <citation type="journal article" date="2014" name="J. Proteomics">
        <title>An enzyme assisted RP-RPLC approach for in-depth analysis of human liver phosphoproteome.</title>
        <authorList>
            <person name="Bian Y."/>
            <person name="Song C."/>
            <person name="Cheng K."/>
            <person name="Dong M."/>
            <person name="Wang F."/>
            <person name="Huang J."/>
            <person name="Sun D."/>
            <person name="Wang L."/>
            <person name="Ye M."/>
            <person name="Zou H."/>
        </authorList>
    </citation>
    <scope>IDENTIFICATION BY MASS SPECTROMETRY [LARGE SCALE ANALYSIS]</scope>
    <source>
        <tissue>Liver</tissue>
    </source>
</reference>
<reference key="26">
    <citation type="journal article" date="2014" name="Nat. Commun.">
        <title>Global profiling of co- and post-translationally N-myristoylated proteomes in human cells.</title>
        <authorList>
            <person name="Thinon E."/>
            <person name="Serwa R.A."/>
            <person name="Broncel M."/>
            <person name="Brannigan J.A."/>
            <person name="Brassat U."/>
            <person name="Wright M.H."/>
            <person name="Heal W.P."/>
            <person name="Wilkinson A.J."/>
            <person name="Mann D.J."/>
            <person name="Tate E.W."/>
        </authorList>
    </citation>
    <scope>MYRISTOYLATION AT GLY-2</scope>
    <scope>CLEAVAGE OF INITIATOR METHIONINE</scope>
    <scope>IDENTIFICATION BY MASS SPECTROMETRY</scope>
</reference>
<reference key="27">
    <citation type="journal article" date="2015" name="Angew. Chem. Int. Ed.">
        <title>Multifunctional reagents for quantitative proteome-wide analysis of protein modification in human cells and dynamic profiling of protein lipidation during vertebrate development.</title>
        <authorList>
            <person name="Broncel M."/>
            <person name="Serwa R.A."/>
            <person name="Ciepla P."/>
            <person name="Krause E."/>
            <person name="Dallman M.J."/>
            <person name="Magee A.I."/>
            <person name="Tate E.W."/>
        </authorList>
    </citation>
    <scope>MYRISTOYLATION AT GLY-2</scope>
    <scope>CLEAVAGE OF INITIATOR METHIONINE</scope>
    <scope>IDENTIFICATION BY MASS SPECTROMETRY</scope>
</reference>
<reference key="28">
    <citation type="journal article" date="2016" name="NPJ Genom. Med.">
        <title>Missense-depleted regions in population exomes implicate ras superfamily nucleotide-binding protein alteration in patients with brain malformation.</title>
        <authorList>
            <person name="Ge X."/>
            <person name="Gong H."/>
            <person name="Dumas K."/>
            <person name="Litwin J."/>
            <person name="Phillips J.J."/>
            <person name="Waisfisz Q."/>
            <person name="Weiss M.M."/>
            <person name="Hendriks Y."/>
            <person name="Stuurman K.E."/>
            <person name="Nelson S.F."/>
            <person name="Grody W.W."/>
            <person name="Lee H."/>
            <person name="Kwok P.Y."/>
            <person name="Shieh J.T."/>
        </authorList>
    </citation>
    <scope>INTERACTION WITH GGA3</scope>
    <scope>INVOLVEMENT IN PVNH8</scope>
    <scope>VARIANTS PVNH8 HIS-35; HIS-99 AND GLU-127</scope>
    <scope>CHARACTERIZATION OF VARIANT PVNH8 HIS-35</scope>
</reference>
<reference key="29">
    <citation type="journal article" date="2015" name="Proteomics">
        <title>N-terminome analysis of the human mitochondrial proteome.</title>
        <authorList>
            <person name="Vaca Jacome A.S."/>
            <person name="Rabilloud T."/>
            <person name="Schaeffer-Reiss C."/>
            <person name="Rompais M."/>
            <person name="Ayoub D."/>
            <person name="Lane L."/>
            <person name="Bairoch A."/>
            <person name="Van Dorsselaer A."/>
            <person name="Carapito C."/>
        </authorList>
    </citation>
    <scope>IDENTIFICATION BY MASS SPECTROMETRY [LARGE SCALE ANALYSIS]</scope>
</reference>
<reference evidence="25" key="30">
    <citation type="journal article" date="1994" name="Nature">
        <title>Structure of the human ADP-ribosylation factor 1 complexed with GDP.</title>
        <authorList>
            <person name="Amor J.C."/>
            <person name="Harrison D.H."/>
            <person name="Kahn R.A."/>
            <person name="Ringe D."/>
        </authorList>
    </citation>
    <scope>X-RAY CRYSTALLOGRAPHY (2.0 ANGSTROMS) IN COMPLEX WITH GDP</scope>
</reference>
<reference key="31">
    <citation type="journal article" date="1999" name="Cell">
        <title>Structural and functional analysis of the ARF1-ARFGAP complex reveals a role for coatomer in GTP hydrolysis.</title>
        <authorList>
            <person name="Goldberg J."/>
        </authorList>
    </citation>
    <scope>X-RAY CRYSTALLOGRAPHY (1.95 ANGSTROMS) IN COMPLEX WITH RAT ARFGAP1 CATALYTIC DOMAIN</scope>
    <scope>CATALYTIC ACTIVITY</scope>
    <scope>ACTIVITY REGULATION</scope>
</reference>
<reference evidence="26" key="32">
    <citation type="journal article" date="2003" name="Mol. Cell">
        <title>Crystal structure of ARF1*Sec7 complexed with brefeldin A and its implications for the guanine nucleotide exchange mechanism.</title>
        <authorList>
            <person name="Mossessova E."/>
            <person name="Corpina R.A."/>
            <person name="Goldberg J."/>
        </authorList>
    </citation>
    <scope>X-RAY CRYSTALLOGRAPHY (2.40 ANGSTROMS) OF 18-181 IN COMPLEX WITH GDP; BREFELDIN AND YEAST GEA1</scope>
</reference>
<reference evidence="27" key="33">
    <citation type="journal article" date="2004" name="J. Biol. Chem.">
        <title>Conformational changes in human Arf1 on nucleotide exchange and deletion of membrane-binding elements.</title>
        <authorList>
            <person name="Seidel R.D."/>
            <person name="Amor J.C."/>
            <person name="Kahn R.A."/>
            <person name="Prestegard J.H."/>
        </authorList>
    </citation>
    <scope>STRUCTURE BY NMR OF 18-181 IN COMPLEX WITH GDP</scope>
</reference>
<reference evidence="28" key="34">
    <citation type="submission" date="2010-07" db="PDB data bank">
        <title>Crystal structure of ARFGAP1-ARF1 fusion protein.</title>
        <authorList>
            <consortium name="Structural genomics consortium (SGC)."/>
        </authorList>
    </citation>
    <scope>X-RAY CRYSTALLOGRAPHY (2.80 ANGSTROMS) OF 11-181 IN COMPLEX WITH GDP</scope>
</reference>
<name>ARF1_HUMAN</name>
<feature type="initiator methionine" description="Removed" evidence="17 18 29 30">
    <location>
        <position position="1"/>
    </location>
</feature>
<feature type="chain" id="PRO_0000207378" description="ADP-ribosylation factor 1">
    <location>
        <begin position="2"/>
        <end position="181"/>
    </location>
</feature>
<feature type="region of interest" description="Important for the stable binding to the membranes" evidence="3">
    <location>
        <begin position="3"/>
        <end position="16"/>
    </location>
</feature>
<feature type="binding site" evidence="20 25">
    <location>
        <begin position="24"/>
        <end position="32"/>
    </location>
    <ligand>
        <name>GTP</name>
        <dbReference type="ChEBI" id="CHEBI:37565"/>
    </ligand>
</feature>
<feature type="binding site" evidence="7 9 20 23 25 26 27 28">
    <location>
        <begin position="126"/>
        <end position="129"/>
    </location>
    <ligand>
        <name>GTP</name>
        <dbReference type="ChEBI" id="CHEBI:37565"/>
    </ligand>
</feature>
<feature type="binding site" evidence="9 20 23 25 26 28">
    <location>
        <position position="160"/>
    </location>
    <ligand>
        <name>GTP</name>
        <dbReference type="ChEBI" id="CHEBI:37565"/>
    </ligand>
</feature>
<feature type="modified residue" description="N-acetylglycine; alternate" evidence="29 30">
    <location>
        <position position="2"/>
    </location>
</feature>
<feature type="lipid moiety-binding region" description="N-myristoyl glycine; alternate" evidence="12 14 17 18">
    <location>
        <position position="2"/>
    </location>
</feature>
<feature type="sequence variant" id="VAR_081272" description="In PVNH8; decreased interaction with GGA3; dbSNP:rs879036238." evidence="19">
    <original>Y</original>
    <variation>H</variation>
    <location>
        <position position="35"/>
    </location>
</feature>
<feature type="sequence variant" id="VAR_081273" description="In PVNH8; uncertain significance." evidence="19">
    <original>R</original>
    <variation>H</variation>
    <location>
        <position position="99"/>
    </location>
</feature>
<feature type="sequence variant" id="VAR_081274" description="In PVNH8." evidence="19">
    <original>K</original>
    <variation>E</variation>
    <location>
        <position position="127"/>
    </location>
</feature>
<feature type="mutagenesis site" description="Inhibits GTP hydrolysis. Coatomer proteins recruitment to the Golgi membrane and formation of coated vesicles are normal. However, Golgi transport is severely reduced due to impaired vesicle uncoating." evidence="21">
    <original>Q</original>
    <variation>L</variation>
    <location>
        <position position="71"/>
    </location>
</feature>
<feature type="turn" evidence="34">
    <location>
        <begin position="8"/>
        <end position="11"/>
    </location>
</feature>
<feature type="strand" evidence="31">
    <location>
        <begin position="14"/>
        <end position="16"/>
    </location>
</feature>
<feature type="strand" evidence="34">
    <location>
        <begin position="18"/>
        <end position="25"/>
    </location>
</feature>
<feature type="helix" evidence="34">
    <location>
        <begin position="30"/>
        <end position="37"/>
    </location>
</feature>
<feature type="strand" evidence="34">
    <location>
        <begin position="43"/>
        <end position="48"/>
    </location>
</feature>
<feature type="strand" evidence="34">
    <location>
        <begin position="51"/>
        <end position="58"/>
    </location>
</feature>
<feature type="strand" evidence="34">
    <location>
        <begin position="61"/>
        <end position="67"/>
    </location>
</feature>
<feature type="turn" evidence="33">
    <location>
        <begin position="72"/>
        <end position="74"/>
    </location>
</feature>
<feature type="helix" evidence="34">
    <location>
        <begin position="76"/>
        <end position="83"/>
    </location>
</feature>
<feature type="strand" evidence="34">
    <location>
        <begin position="86"/>
        <end position="93"/>
    </location>
</feature>
<feature type="helix" evidence="34">
    <location>
        <begin position="97"/>
        <end position="99"/>
    </location>
</feature>
<feature type="helix" evidence="34">
    <location>
        <begin position="100"/>
        <end position="111"/>
    </location>
</feature>
<feature type="helix" evidence="34">
    <location>
        <begin position="114"/>
        <end position="116"/>
    </location>
</feature>
<feature type="strand" evidence="34">
    <location>
        <begin position="120"/>
        <end position="126"/>
    </location>
</feature>
<feature type="strand" evidence="32">
    <location>
        <begin position="131"/>
        <end position="134"/>
    </location>
</feature>
<feature type="helix" evidence="34">
    <location>
        <begin position="136"/>
        <end position="143"/>
    </location>
</feature>
<feature type="helix" evidence="34">
    <location>
        <begin position="145"/>
        <end position="147"/>
    </location>
</feature>
<feature type="strand" evidence="34">
    <location>
        <begin position="153"/>
        <end position="157"/>
    </location>
</feature>
<feature type="turn" evidence="34">
    <location>
        <begin position="160"/>
        <end position="163"/>
    </location>
</feature>
<feature type="helix" evidence="34">
    <location>
        <begin position="166"/>
        <end position="178"/>
    </location>
</feature>
<evidence type="ECO:0000250" key="1">
    <source>
        <dbReference type="UniProtKB" id="P84078"/>
    </source>
</evidence>
<evidence type="ECO:0000250" key="2">
    <source>
        <dbReference type="UniProtKB" id="P84079"/>
    </source>
</evidence>
<evidence type="ECO:0000250" key="3">
    <source>
        <dbReference type="UniProtKB" id="P84080"/>
    </source>
</evidence>
<evidence type="ECO:0000269" key="4">
    <source>
    </source>
</evidence>
<evidence type="ECO:0000269" key="5">
    <source>
    </source>
</evidence>
<evidence type="ECO:0000269" key="6">
    <source>
    </source>
</evidence>
<evidence type="ECO:0000269" key="7">
    <source>
    </source>
</evidence>
<evidence type="ECO:0000269" key="8">
    <source>
    </source>
</evidence>
<evidence type="ECO:0000269" key="9">
    <source>
    </source>
</evidence>
<evidence type="ECO:0000269" key="10">
    <source>
    </source>
</evidence>
<evidence type="ECO:0000269" key="11">
    <source>
    </source>
</evidence>
<evidence type="ECO:0000269" key="12">
    <source>
    </source>
</evidence>
<evidence type="ECO:0000269" key="13">
    <source>
    </source>
</evidence>
<evidence type="ECO:0000269" key="14">
    <source>
    </source>
</evidence>
<evidence type="ECO:0000269" key="15">
    <source>
    </source>
</evidence>
<evidence type="ECO:0000269" key="16">
    <source>
    </source>
</evidence>
<evidence type="ECO:0000269" key="17">
    <source>
    </source>
</evidence>
<evidence type="ECO:0000269" key="18">
    <source>
    </source>
</evidence>
<evidence type="ECO:0000269" key="19">
    <source>
    </source>
</evidence>
<evidence type="ECO:0000269" key="20">
    <source>
    </source>
</evidence>
<evidence type="ECO:0000269" key="21">
    <source>
    </source>
</evidence>
<evidence type="ECO:0000269" key="22">
    <source>
    </source>
</evidence>
<evidence type="ECO:0000269" key="23">
    <source ref="34"/>
</evidence>
<evidence type="ECO:0000305" key="24"/>
<evidence type="ECO:0007744" key="25">
    <source>
        <dbReference type="PDB" id="1HUR"/>
    </source>
</evidence>
<evidence type="ECO:0007744" key="26">
    <source>
        <dbReference type="PDB" id="1RE0"/>
    </source>
</evidence>
<evidence type="ECO:0007744" key="27">
    <source>
        <dbReference type="PDB" id="1U81"/>
    </source>
</evidence>
<evidence type="ECO:0007744" key="28">
    <source>
        <dbReference type="PDB" id="3O47"/>
    </source>
</evidence>
<evidence type="ECO:0007744" key="29">
    <source>
    </source>
</evidence>
<evidence type="ECO:0007744" key="30">
    <source>
    </source>
</evidence>
<evidence type="ECO:0007829" key="31">
    <source>
        <dbReference type="PDB" id="1HUR"/>
    </source>
</evidence>
<evidence type="ECO:0007829" key="32">
    <source>
        <dbReference type="PDB" id="1U81"/>
    </source>
</evidence>
<evidence type="ECO:0007829" key="33">
    <source>
        <dbReference type="PDB" id="7R4H"/>
    </source>
</evidence>
<evidence type="ECO:0007829" key="34">
    <source>
        <dbReference type="PDB" id="8SDW"/>
    </source>
</evidence>
<dbReference type="EC" id="3.6.5.2" evidence="4 5 8 21"/>
<dbReference type="EMBL" id="M36340">
    <property type="protein sequence ID" value="AAA35552.1"/>
    <property type="molecule type" value="mRNA"/>
</dbReference>
<dbReference type="EMBL" id="M84326">
    <property type="protein sequence ID" value="AAA35512.1"/>
    <property type="molecule type" value="mRNA"/>
</dbReference>
<dbReference type="EMBL" id="AF052179">
    <property type="protein sequence ID" value="AAC28623.1"/>
    <property type="molecule type" value="mRNA"/>
</dbReference>
<dbReference type="EMBL" id="AF055002">
    <property type="protein sequence ID" value="AAC09356.1"/>
    <property type="molecule type" value="mRNA"/>
</dbReference>
<dbReference type="EMBL" id="AF493881">
    <property type="protein sequence ID" value="AAM12595.1"/>
    <property type="molecule type" value="mRNA"/>
</dbReference>
<dbReference type="EMBL" id="BT007393">
    <property type="protein sequence ID" value="AAP36057.1"/>
    <property type="molecule type" value="mRNA"/>
</dbReference>
<dbReference type="EMBL" id="AL136379">
    <property type="status" value="NOT_ANNOTATED_CDS"/>
    <property type="molecule type" value="Genomic_DNA"/>
</dbReference>
<dbReference type="EMBL" id="BC009247">
    <property type="protein sequence ID" value="AAH09247.1"/>
    <property type="molecule type" value="mRNA"/>
</dbReference>
<dbReference type="EMBL" id="BC010429">
    <property type="protein sequence ID" value="AAH10429.1"/>
    <property type="molecule type" value="mRNA"/>
</dbReference>
<dbReference type="EMBL" id="BC011358">
    <property type="protein sequence ID" value="AAH11358.1"/>
    <property type="molecule type" value="mRNA"/>
</dbReference>
<dbReference type="EMBL" id="M84332">
    <property type="protein sequence ID" value="AAA35511.1"/>
    <property type="molecule type" value="Genomic_DNA"/>
</dbReference>
<dbReference type="CCDS" id="CCDS1565.1"/>
<dbReference type="PIR" id="B40187">
    <property type="entry name" value="A33283"/>
</dbReference>
<dbReference type="RefSeq" id="NP_001019397.1">
    <property type="nucleotide sequence ID" value="NM_001024226.2"/>
</dbReference>
<dbReference type="RefSeq" id="NP_001019398.1">
    <property type="nucleotide sequence ID" value="NM_001024227.1"/>
</dbReference>
<dbReference type="RefSeq" id="NP_001019399.1">
    <property type="nucleotide sequence ID" value="NM_001024228.2"/>
</dbReference>
<dbReference type="RefSeq" id="NP_001649.1">
    <property type="nucleotide sequence ID" value="NM_001658.4"/>
</dbReference>
<dbReference type="PDB" id="1HUR">
    <property type="method" value="X-ray"/>
    <property type="resolution" value="2.00 A"/>
    <property type="chains" value="A/B=2-181"/>
</dbReference>
<dbReference type="PDB" id="1RE0">
    <property type="method" value="X-ray"/>
    <property type="resolution" value="2.40 A"/>
    <property type="chains" value="A=18-181"/>
</dbReference>
<dbReference type="PDB" id="1U81">
    <property type="method" value="NMR"/>
    <property type="chains" value="A=18-181"/>
</dbReference>
<dbReference type="PDB" id="3O47">
    <property type="method" value="X-ray"/>
    <property type="resolution" value="2.80 A"/>
    <property type="chains" value="A/B=11-181"/>
</dbReference>
<dbReference type="PDB" id="4HMY">
    <property type="method" value="X-ray"/>
    <property type="resolution" value="7.00 A"/>
    <property type="chains" value="C=17-181"/>
</dbReference>
<dbReference type="PDB" id="6CM9">
    <property type="method" value="EM"/>
    <property type="resolution" value="3.73 A"/>
    <property type="chains" value="C/H=17-181"/>
</dbReference>
<dbReference type="PDB" id="6CRI">
    <property type="method" value="EM"/>
    <property type="resolution" value="6.80 A"/>
    <property type="chains" value="C/H/K/L/U/V=17-181"/>
</dbReference>
<dbReference type="PDB" id="6D83">
    <property type="method" value="EM"/>
    <property type="resolution" value="4.27 A"/>
    <property type="chains" value="C/H=17-181"/>
</dbReference>
<dbReference type="PDB" id="6D84">
    <property type="method" value="EM"/>
    <property type="resolution" value="6.72 A"/>
    <property type="chains" value="C/H/I/N=17-181"/>
</dbReference>
<dbReference type="PDB" id="6DFF">
    <property type="method" value="EM"/>
    <property type="resolution" value="3.90 A"/>
    <property type="chains" value="C/H=17-181"/>
</dbReference>
<dbReference type="PDB" id="6FAE">
    <property type="method" value="X-ray"/>
    <property type="resolution" value="2.35 A"/>
    <property type="chains" value="B=18-181"/>
</dbReference>
<dbReference type="PDB" id="7DN8">
    <property type="method" value="X-ray"/>
    <property type="resolution" value="2.61 A"/>
    <property type="chains" value="B/D/F/H=17-181"/>
</dbReference>
<dbReference type="PDB" id="7DN9">
    <property type="method" value="X-ray"/>
    <property type="resolution" value="3.29 A"/>
    <property type="chains" value="B/D/F/H=17-181"/>
</dbReference>
<dbReference type="PDB" id="7MGE">
    <property type="method" value="EM"/>
    <property type="resolution" value="3.94 A"/>
    <property type="chains" value="E=17-180"/>
</dbReference>
<dbReference type="PDB" id="7R4H">
    <property type="method" value="EM"/>
    <property type="resolution" value="2.34 A"/>
    <property type="chains" value="C/H=17-181"/>
</dbReference>
<dbReference type="PDB" id="7UX3">
    <property type="method" value="EM"/>
    <property type="resolution" value="9.60 A"/>
    <property type="chains" value="C/H=2-181"/>
</dbReference>
<dbReference type="PDB" id="8D4C">
    <property type="method" value="EM"/>
    <property type="resolution" value="9.30 A"/>
    <property type="chains" value="C/D/F/H=2-181"/>
</dbReference>
<dbReference type="PDB" id="8D4D">
    <property type="method" value="EM"/>
    <property type="resolution" value="9.60 A"/>
    <property type="chains" value="C/D/F/H=2-181"/>
</dbReference>
<dbReference type="PDB" id="8D4E">
    <property type="method" value="EM"/>
    <property type="resolution" value="9.20 A"/>
    <property type="chains" value="C/H/Z=2-181"/>
</dbReference>
<dbReference type="PDB" id="8D4F">
    <property type="method" value="EM"/>
    <property type="resolution" value="9.80 A"/>
    <property type="chains" value="C/D/F/H/Q/Z=2-181"/>
</dbReference>
<dbReference type="PDB" id="8D4G">
    <property type="method" value="EM"/>
    <property type="resolution" value="11.60 A"/>
    <property type="chains" value="C/D/F/H/Q/Z=1-181"/>
</dbReference>
<dbReference type="PDB" id="8D9R">
    <property type="method" value="EM"/>
    <property type="resolution" value="20.00 A"/>
    <property type="chains" value="3/4/5/6/7/C/H/J/K/O/P/Q/X/Z/a/b/c/d=2-181"/>
</dbReference>
<dbReference type="PDB" id="8D9S">
    <property type="method" value="EM"/>
    <property type="resolution" value="20.00 A"/>
    <property type="chains" value="3/4/5/6/7/C/H/J/K/O/P/Q/X/Z/a/b/c/d=2-181"/>
</dbReference>
<dbReference type="PDB" id="8D9U">
    <property type="method" value="EM"/>
    <property type="resolution" value="20.00 A"/>
    <property type="chains" value="C/H/J/K/O/P/Q/X/Z/a/b/c=2-181"/>
</dbReference>
<dbReference type="PDB" id="8D9W">
    <property type="method" value="EM"/>
    <property type="resolution" value="9.30 A"/>
    <property type="chains" value="F/I=2-181"/>
</dbReference>
<dbReference type="PDB" id="8SDW">
    <property type="method" value="X-ray"/>
    <property type="resolution" value="1.75 A"/>
    <property type="chains" value="A=1-181"/>
</dbReference>
<dbReference type="PDB" id="9C58">
    <property type="method" value="EM"/>
    <property type="resolution" value="4.70 A"/>
    <property type="chains" value="A=2-181"/>
</dbReference>
<dbReference type="PDB" id="9C59">
    <property type="method" value="EM"/>
    <property type="resolution" value="4.30 A"/>
    <property type="chains" value="A/C/a/c=2-181"/>
</dbReference>
<dbReference type="PDB" id="9C5A">
    <property type="method" value="EM"/>
    <property type="resolution" value="4.20 A"/>
    <property type="chains" value="C/c=2-181"/>
</dbReference>
<dbReference type="PDB" id="9C5B">
    <property type="method" value="EM"/>
    <property type="resolution" value="4.50 A"/>
    <property type="chains" value="A/C=2-181"/>
</dbReference>
<dbReference type="PDBsum" id="1HUR"/>
<dbReference type="PDBsum" id="1RE0"/>
<dbReference type="PDBsum" id="1U81"/>
<dbReference type="PDBsum" id="3O47"/>
<dbReference type="PDBsum" id="4HMY"/>
<dbReference type="PDBsum" id="6CM9"/>
<dbReference type="PDBsum" id="6CRI"/>
<dbReference type="PDBsum" id="6D83"/>
<dbReference type="PDBsum" id="6D84"/>
<dbReference type="PDBsum" id="6DFF"/>
<dbReference type="PDBsum" id="6FAE"/>
<dbReference type="PDBsum" id="7DN8"/>
<dbReference type="PDBsum" id="7DN9"/>
<dbReference type="PDBsum" id="7MGE"/>
<dbReference type="PDBsum" id="7R4H"/>
<dbReference type="PDBsum" id="7UX3"/>
<dbReference type="PDBsum" id="8D4C"/>
<dbReference type="PDBsum" id="8D4D"/>
<dbReference type="PDBsum" id="8D4E"/>
<dbReference type="PDBsum" id="8D4F"/>
<dbReference type="PDBsum" id="8D4G"/>
<dbReference type="PDBsum" id="8D9R"/>
<dbReference type="PDBsum" id="8D9S"/>
<dbReference type="PDBsum" id="8D9U"/>
<dbReference type="PDBsum" id="8D9W"/>
<dbReference type="PDBsum" id="8SDW"/>
<dbReference type="PDBsum" id="9C58"/>
<dbReference type="PDBsum" id="9C59"/>
<dbReference type="PDBsum" id="9C5A"/>
<dbReference type="PDBsum" id="9C5B"/>
<dbReference type="BMRB" id="P84077"/>
<dbReference type="EMDB" id="EMD-14312"/>
<dbReference type="EMDB" id="EMD-23827"/>
<dbReference type="EMDB" id="EMD-26853"/>
<dbReference type="EMDB" id="EMD-27181"/>
<dbReference type="EMDB" id="EMD-27182"/>
<dbReference type="EMDB" id="EMD-27183"/>
<dbReference type="EMDB" id="EMD-27184"/>
<dbReference type="EMDB" id="EMD-27185"/>
<dbReference type="EMDB" id="EMD-45207"/>
<dbReference type="EMDB" id="EMD-45208"/>
<dbReference type="EMDB" id="EMD-45209"/>
<dbReference type="EMDB" id="EMD-45210"/>
<dbReference type="EMDB" id="EMD-45211"/>
<dbReference type="EMDB" id="EMD-45212"/>
<dbReference type="EMDB" id="EMD-45213"/>
<dbReference type="EMDB" id="EMD-7563"/>
<dbReference type="SMR" id="P84077"/>
<dbReference type="BioGRID" id="106870">
    <property type="interactions" value="284"/>
</dbReference>
<dbReference type="CORUM" id="P84077"/>
<dbReference type="DIP" id="DIP-31597N"/>
<dbReference type="ELM" id="P84077"/>
<dbReference type="FunCoup" id="P84077">
    <property type="interactions" value="3004"/>
</dbReference>
<dbReference type="IntAct" id="P84077">
    <property type="interactions" value="75"/>
</dbReference>
<dbReference type="MINT" id="P84077"/>
<dbReference type="STRING" id="9606.ENSP00000440005"/>
<dbReference type="BindingDB" id="P84077"/>
<dbReference type="ChEMBL" id="CHEMBL5985"/>
<dbReference type="DrugBank" id="DB02774">
    <property type="generic name" value="1,3-Propanediol"/>
</dbReference>
<dbReference type="DrugBank" id="DB07348">
    <property type="generic name" value="Brefeldin A"/>
</dbReference>
<dbReference type="DrugBank" id="DB09093">
    <property type="generic name" value="Chlortetracycline"/>
</dbReference>
<dbReference type="DrugBank" id="DB09462">
    <property type="generic name" value="Glycerin"/>
</dbReference>
<dbReference type="DrugBank" id="DB04121">
    <property type="generic name" value="Guanosine-3'-monophosphate-5'-diphosphate"/>
</dbReference>
<dbReference type="DrugBank" id="DB04315">
    <property type="generic name" value="Guanosine-5'-Diphosphate"/>
</dbReference>
<dbReference type="DrugBank" id="DB04137">
    <property type="generic name" value="Guanosine-5'-Triphosphate"/>
</dbReference>
<dbReference type="DrugBank" id="DB08231">
    <property type="generic name" value="Myristic acid"/>
</dbReference>
<dbReference type="GlyGen" id="P84077">
    <property type="glycosylation" value="1 site, 1 O-linked glycan (1 site)"/>
</dbReference>
<dbReference type="iPTMnet" id="P84077"/>
<dbReference type="MetOSite" id="P84077"/>
<dbReference type="PhosphoSitePlus" id="P84077"/>
<dbReference type="SwissPalm" id="P84077"/>
<dbReference type="BioMuta" id="ARF1"/>
<dbReference type="DMDM" id="51316985"/>
<dbReference type="jPOST" id="P84077"/>
<dbReference type="MassIVE" id="P84077"/>
<dbReference type="PaxDb" id="9606-ENSP00000440005"/>
<dbReference type="PeptideAtlas" id="P84077"/>
<dbReference type="PRIDE" id="P84077"/>
<dbReference type="ProteomicsDB" id="57747"/>
<dbReference type="Pumba" id="P84077"/>
<dbReference type="TopDownProteomics" id="P84077"/>
<dbReference type="Antibodypedia" id="3569">
    <property type="antibodies" value="602 antibodies from 37 providers"/>
</dbReference>
<dbReference type="DNASU" id="375"/>
<dbReference type="Ensembl" id="ENST00000272102.10">
    <property type="protein sequence ID" value="ENSP00000272102.5"/>
    <property type="gene ID" value="ENSG00000143761.17"/>
</dbReference>
<dbReference type="Ensembl" id="ENST00000470558.5">
    <property type="protein sequence ID" value="ENSP00000514654.1"/>
    <property type="gene ID" value="ENSG00000143761.17"/>
</dbReference>
<dbReference type="Ensembl" id="ENST00000478336.5">
    <property type="protein sequence ID" value="ENSP00000514657.1"/>
    <property type="gene ID" value="ENSG00000143761.17"/>
</dbReference>
<dbReference type="Ensembl" id="ENST00000478424.5">
    <property type="protein sequence ID" value="ENSP00000514653.1"/>
    <property type="gene ID" value="ENSG00000143761.17"/>
</dbReference>
<dbReference type="GeneID" id="375"/>
<dbReference type="KEGG" id="hsa:375"/>
<dbReference type="MANE-Select" id="ENST00000272102.10">
    <property type="protein sequence ID" value="ENSP00000272102.5"/>
    <property type="RefSeq nucleotide sequence ID" value="NM_001658.4"/>
    <property type="RefSeq protein sequence ID" value="NP_001649.1"/>
</dbReference>
<dbReference type="UCSC" id="uc001hrr.4">
    <property type="organism name" value="human"/>
</dbReference>
<dbReference type="AGR" id="HGNC:652"/>
<dbReference type="CTD" id="375"/>
<dbReference type="DisGeNET" id="375"/>
<dbReference type="GeneCards" id="ARF1"/>
<dbReference type="HGNC" id="HGNC:652">
    <property type="gene designation" value="ARF1"/>
</dbReference>
<dbReference type="HPA" id="ENSG00000143761">
    <property type="expression patterns" value="Low tissue specificity"/>
</dbReference>
<dbReference type="MalaCards" id="ARF1"/>
<dbReference type="MIM" id="103180">
    <property type="type" value="gene"/>
</dbReference>
<dbReference type="MIM" id="618185">
    <property type="type" value="phenotype"/>
</dbReference>
<dbReference type="neXtProt" id="NX_P84077"/>
<dbReference type="OpenTargets" id="ENSG00000143761"/>
<dbReference type="Orphanet" id="98892">
    <property type="disease" value="Periventricular nodular heterotopia"/>
</dbReference>
<dbReference type="PharmGKB" id="PA24934"/>
<dbReference type="VEuPathDB" id="HostDB:ENSG00000143761"/>
<dbReference type="eggNOG" id="KOG0070">
    <property type="taxonomic scope" value="Eukaryota"/>
</dbReference>
<dbReference type="GeneTree" id="ENSGT00950000183080"/>
<dbReference type="HOGENOM" id="CLU_040729_9_3_1"/>
<dbReference type="InParanoid" id="P84077"/>
<dbReference type="OMA" id="LCYNGHI"/>
<dbReference type="OrthoDB" id="2011769at2759"/>
<dbReference type="PAN-GO" id="P84077">
    <property type="GO annotations" value="5 GO annotations based on evolutionary models"/>
</dbReference>
<dbReference type="PhylomeDB" id="P84077"/>
<dbReference type="TreeFam" id="TF300808"/>
<dbReference type="PathwayCommons" id="P84077"/>
<dbReference type="Reactome" id="R-HSA-1660499">
    <property type="pathway name" value="Synthesis of PIPs at the plasma membrane"/>
</dbReference>
<dbReference type="Reactome" id="R-HSA-1660514">
    <property type="pathway name" value="Synthesis of PIPs at the Golgi membrane"/>
</dbReference>
<dbReference type="Reactome" id="R-HSA-167590">
    <property type="pathway name" value="Nef Mediated CD4 Down-regulation"/>
</dbReference>
<dbReference type="Reactome" id="R-HSA-199992">
    <property type="pathway name" value="trans-Golgi Network Vesicle Budding"/>
</dbReference>
<dbReference type="Reactome" id="R-HSA-2132295">
    <property type="pathway name" value="MHC class II antigen presentation"/>
</dbReference>
<dbReference type="Reactome" id="R-HSA-432720">
    <property type="pathway name" value="Lysosome Vesicle Biogenesis"/>
</dbReference>
<dbReference type="Reactome" id="R-HSA-432722">
    <property type="pathway name" value="Golgi Associated Vesicle Biogenesis"/>
</dbReference>
<dbReference type="Reactome" id="R-HSA-6807878">
    <property type="pathway name" value="COPI-mediated anterograde transport"/>
</dbReference>
<dbReference type="Reactome" id="R-HSA-6811434">
    <property type="pathway name" value="COPI-dependent Golgi-to-ER retrograde traffic"/>
</dbReference>
<dbReference type="Reactome" id="R-HSA-6811438">
    <property type="pathway name" value="Intra-Golgi traffic"/>
</dbReference>
<dbReference type="Reactome" id="R-HSA-8950505">
    <property type="pathway name" value="Gene and protein expression by JAK-STAT signaling after Interleukin-12 stimulation"/>
</dbReference>
<dbReference type="Reactome" id="R-HSA-9845576">
    <property type="pathway name" value="Glycosphingolipid transport"/>
</dbReference>
<dbReference type="SignaLink" id="P84077"/>
<dbReference type="SIGNOR" id="P84077"/>
<dbReference type="BioGRID-ORCS" id="375">
    <property type="hits" value="213 hits in 1177 CRISPR screens"/>
</dbReference>
<dbReference type="CD-CODE" id="FB4E32DD">
    <property type="entry name" value="Presynaptic clusters and postsynaptic densities"/>
</dbReference>
<dbReference type="ChiTaRS" id="ARF1">
    <property type="organism name" value="human"/>
</dbReference>
<dbReference type="EvolutionaryTrace" id="P84077"/>
<dbReference type="GeneWiki" id="ARF1"/>
<dbReference type="GenomeRNAi" id="375"/>
<dbReference type="Pharos" id="P84077">
    <property type="development level" value="Tchem"/>
</dbReference>
<dbReference type="PRO" id="PR:P84077"/>
<dbReference type="Proteomes" id="UP000005640">
    <property type="component" value="Chromosome 1"/>
</dbReference>
<dbReference type="RNAct" id="P84077">
    <property type="molecule type" value="protein"/>
</dbReference>
<dbReference type="Bgee" id="ENSG00000143761">
    <property type="expression patterns" value="Expressed in adult organism and 210 other cell types or tissues"/>
</dbReference>
<dbReference type="ExpressionAtlas" id="P84077">
    <property type="expression patterns" value="baseline and differential"/>
</dbReference>
<dbReference type="GO" id="GO:0031252">
    <property type="term" value="C:cell leading edge"/>
    <property type="evidence" value="ECO:0000314"/>
    <property type="project" value="UniProtKB"/>
</dbReference>
<dbReference type="GO" id="GO:0005737">
    <property type="term" value="C:cytoplasm"/>
    <property type="evidence" value="ECO:0000318"/>
    <property type="project" value="GO_Central"/>
</dbReference>
<dbReference type="GO" id="GO:0005829">
    <property type="term" value="C:cytosol"/>
    <property type="evidence" value="ECO:0000304"/>
    <property type="project" value="Reactome"/>
</dbReference>
<dbReference type="GO" id="GO:0070062">
    <property type="term" value="C:extracellular exosome"/>
    <property type="evidence" value="ECO:0007005"/>
    <property type="project" value="UniProtKB"/>
</dbReference>
<dbReference type="GO" id="GO:0005925">
    <property type="term" value="C:focal adhesion"/>
    <property type="evidence" value="ECO:0007005"/>
    <property type="project" value="UniProtKB"/>
</dbReference>
<dbReference type="GO" id="GO:0000139">
    <property type="term" value="C:Golgi membrane"/>
    <property type="evidence" value="ECO:0000304"/>
    <property type="project" value="Reactome"/>
</dbReference>
<dbReference type="GO" id="GO:0043005">
    <property type="term" value="C:neuron projection"/>
    <property type="evidence" value="ECO:0007669"/>
    <property type="project" value="UniProtKB-KW"/>
</dbReference>
<dbReference type="GO" id="GO:0005886">
    <property type="term" value="C:plasma membrane"/>
    <property type="evidence" value="ECO:0000318"/>
    <property type="project" value="GO_Central"/>
</dbReference>
<dbReference type="GO" id="GO:0014069">
    <property type="term" value="C:postsynaptic density"/>
    <property type="evidence" value="ECO:0007669"/>
    <property type="project" value="UniProtKB-SubCell"/>
</dbReference>
<dbReference type="GO" id="GO:0032991">
    <property type="term" value="C:protein-containing complex"/>
    <property type="evidence" value="ECO:0000315"/>
    <property type="project" value="CAFA"/>
</dbReference>
<dbReference type="GO" id="GO:0030017">
    <property type="term" value="C:sarcomere"/>
    <property type="evidence" value="ECO:0007669"/>
    <property type="project" value="Ensembl"/>
</dbReference>
<dbReference type="GO" id="GO:0005525">
    <property type="term" value="F:GTP binding"/>
    <property type="evidence" value="ECO:0000318"/>
    <property type="project" value="GO_Central"/>
</dbReference>
<dbReference type="GO" id="GO:0003924">
    <property type="term" value="F:GTPase activity"/>
    <property type="evidence" value="ECO:0000304"/>
    <property type="project" value="Reactome"/>
</dbReference>
<dbReference type="GO" id="GO:0000287">
    <property type="term" value="F:magnesium ion binding"/>
    <property type="evidence" value="ECO:0007669"/>
    <property type="project" value="Ensembl"/>
</dbReference>
<dbReference type="GO" id="GO:0019904">
    <property type="term" value="F:protein domain specific binding"/>
    <property type="evidence" value="ECO:0000315"/>
    <property type="project" value="CAFA"/>
</dbReference>
<dbReference type="GO" id="GO:0003723">
    <property type="term" value="F:RNA binding"/>
    <property type="evidence" value="ECO:0007005"/>
    <property type="project" value="UniProtKB"/>
</dbReference>
<dbReference type="GO" id="GO:0098586">
    <property type="term" value="P:cellular response to virus"/>
    <property type="evidence" value="ECO:0000315"/>
    <property type="project" value="UniProtKB"/>
</dbReference>
<dbReference type="GO" id="GO:0097061">
    <property type="term" value="P:dendritic spine organization"/>
    <property type="evidence" value="ECO:0000250"/>
    <property type="project" value="UniProtKB"/>
</dbReference>
<dbReference type="GO" id="GO:0006878">
    <property type="term" value="P:intracellular copper ion homeostasis"/>
    <property type="evidence" value="ECO:0000315"/>
    <property type="project" value="UniProtKB"/>
</dbReference>
<dbReference type="GO" id="GO:0006886">
    <property type="term" value="P:intracellular protein transport"/>
    <property type="evidence" value="ECO:0000318"/>
    <property type="project" value="GO_Central"/>
</dbReference>
<dbReference type="GO" id="GO:0060292">
    <property type="term" value="P:long-term synaptic depression"/>
    <property type="evidence" value="ECO:0000250"/>
    <property type="project" value="UniProtKB"/>
</dbReference>
<dbReference type="GO" id="GO:1990386">
    <property type="term" value="P:mitotic cleavage furrow ingression"/>
    <property type="evidence" value="ECO:0007669"/>
    <property type="project" value="Ensembl"/>
</dbReference>
<dbReference type="GO" id="GO:0034315">
    <property type="term" value="P:regulation of Arp2/3 complex-mediated actin nucleation"/>
    <property type="evidence" value="ECO:0000250"/>
    <property type="project" value="UniProtKB"/>
</dbReference>
<dbReference type="GO" id="GO:0002090">
    <property type="term" value="P:regulation of receptor internalization"/>
    <property type="evidence" value="ECO:0000250"/>
    <property type="project" value="UniProtKB"/>
</dbReference>
<dbReference type="GO" id="GO:0016192">
    <property type="term" value="P:vesicle-mediated transport"/>
    <property type="evidence" value="ECO:0000318"/>
    <property type="project" value="GO_Central"/>
</dbReference>
<dbReference type="CDD" id="cd04150">
    <property type="entry name" value="Arf1_5_like"/>
    <property type="match status" value="1"/>
</dbReference>
<dbReference type="FunFam" id="3.40.50.300:FF:003500">
    <property type="entry name" value="ADP-ribosylation factor 1"/>
    <property type="match status" value="1"/>
</dbReference>
<dbReference type="Gene3D" id="3.40.50.300">
    <property type="entry name" value="P-loop containing nucleotide triphosphate hydrolases"/>
    <property type="match status" value="1"/>
</dbReference>
<dbReference type="InterPro" id="IPR045872">
    <property type="entry name" value="Arf1-5-like"/>
</dbReference>
<dbReference type="InterPro" id="IPR027417">
    <property type="entry name" value="P-loop_NTPase"/>
</dbReference>
<dbReference type="InterPro" id="IPR005225">
    <property type="entry name" value="Small_GTP-bd"/>
</dbReference>
<dbReference type="InterPro" id="IPR024156">
    <property type="entry name" value="Small_GTPase_ARF"/>
</dbReference>
<dbReference type="InterPro" id="IPR006689">
    <property type="entry name" value="Small_GTPase_ARF/SAR"/>
</dbReference>
<dbReference type="NCBIfam" id="TIGR00231">
    <property type="entry name" value="small_GTP"/>
    <property type="match status" value="1"/>
</dbReference>
<dbReference type="PANTHER" id="PTHR11711">
    <property type="entry name" value="ADP RIBOSYLATION FACTOR-RELATED"/>
    <property type="match status" value="1"/>
</dbReference>
<dbReference type="Pfam" id="PF00025">
    <property type="entry name" value="Arf"/>
    <property type="match status" value="1"/>
</dbReference>
<dbReference type="PRINTS" id="PR00328">
    <property type="entry name" value="SAR1GTPBP"/>
</dbReference>
<dbReference type="SMART" id="SM00177">
    <property type="entry name" value="ARF"/>
    <property type="match status" value="1"/>
</dbReference>
<dbReference type="SMART" id="SM00175">
    <property type="entry name" value="RAB"/>
    <property type="match status" value="1"/>
</dbReference>
<dbReference type="SMART" id="SM00178">
    <property type="entry name" value="SAR"/>
    <property type="match status" value="1"/>
</dbReference>
<dbReference type="SUPFAM" id="SSF52540">
    <property type="entry name" value="P-loop containing nucleoside triphosphate hydrolases"/>
    <property type="match status" value="1"/>
</dbReference>
<dbReference type="PROSITE" id="PS51417">
    <property type="entry name" value="ARF"/>
    <property type="match status" value="1"/>
</dbReference>
<protein>
    <recommendedName>
        <fullName>ADP-ribosylation factor 1</fullName>
        <ecNumber evidence="4 5 8 21">3.6.5.2</ecNumber>
    </recommendedName>
</protein>
<sequence>MGNIFANLFKGLFGKKEMRILMVGLDAAGKTTILYKLKLGEIVTTIPTIGFNVETVEYKNISFTVWDVGGQDKIRPLWRHYFQNTQGLIFVVDSNDRERVNEAREELMRMLAEDELRDAVLLVFANKQDLPNAMNAAEITDKLGLHSLRHRNWYIQATCATSGDGLYEGLDWLSNQLRNQK</sequence>
<gene>
    <name type="primary">ARF1</name>
</gene>
<accession>P84077</accession>
<accession>P10947</accession>
<accession>P32889</accession>
<keyword id="KW-0002">3D-structure</keyword>
<keyword id="KW-0007">Acetylation</keyword>
<keyword id="KW-0903">Direct protein sequencing</keyword>
<keyword id="KW-0225">Disease variant</keyword>
<keyword id="KW-0931">ER-Golgi transport</keyword>
<keyword id="KW-0333">Golgi apparatus</keyword>
<keyword id="KW-0342">GTP-binding</keyword>
<keyword id="KW-0378">Hydrolase</keyword>
<keyword id="KW-0449">Lipoprotein</keyword>
<keyword id="KW-0472">Membrane</keyword>
<keyword id="KW-0519">Myristate</keyword>
<keyword id="KW-0547">Nucleotide-binding</keyword>
<keyword id="KW-0653">Protein transport</keyword>
<keyword id="KW-1267">Proteomics identification</keyword>
<keyword id="KW-1185">Reference proteome</keyword>
<keyword id="KW-0770">Synapse</keyword>
<keyword id="KW-0771">Synaptosome</keyword>
<keyword id="KW-0813">Transport</keyword>
<comment type="function">
    <text evidence="2 21">Small GTPase involved in protein trafficking between different compartments (PubMed:8253837). Modulates vesicle budding and uncoating within the Golgi complex (PubMed:8253837). In its GTP-bound form, triggers the recruitment of coatomer proteins to the Golgi membrane (PubMed:8253837). The hydrolysis of ARF1-bound GTP, which is mediated by ARFGAPs proteins, is required for dissociation of coat proteins from Golgi membranes and vesicles (PubMed:8253837). The GTP-bound form interacts with PICK1 to limit PICK1-mediated inhibition of Arp2/3 complex activity; the function is linked to AMPA receptor (AMPAR) trafficking, regulation of synaptic plasticity of excitatory synapses and spine shrinkage during long-term depression (LTD) (By similarity). Plays a key role in the regulation of intestinal stem cells and gut microbiota, and is essential for maintaining intestinal homeostasis (By similarity). Also plays a critical role in mast cell expansion but not in mast cell maturation by facilitating optimal mTORC1 activation (By similarity).</text>
</comment>
<comment type="function">
    <text evidence="24">(Microbial infection) Functions as an allosteric activator of the cholera toxin catalytic subunit, an ADP-ribosyltransferase.</text>
</comment>
<comment type="catalytic activity">
    <reaction evidence="4 5 8 21">
        <text>GTP + H2O = GDP + phosphate + H(+)</text>
        <dbReference type="Rhea" id="RHEA:19669"/>
        <dbReference type="ChEBI" id="CHEBI:15377"/>
        <dbReference type="ChEBI" id="CHEBI:15378"/>
        <dbReference type="ChEBI" id="CHEBI:37565"/>
        <dbReference type="ChEBI" id="CHEBI:43474"/>
        <dbReference type="ChEBI" id="CHEBI:58189"/>
        <dbReference type="EC" id="3.6.5.2"/>
    </reaction>
</comment>
<comment type="activity regulation">
    <text evidence="4 5 8">Alternates between an inactive GDP-bound form and an active GTP-bound form (PubMed:10022920, PubMed:10102276, PubMed:15107860). Intrinsic GTPase activity is almost undetectable in vitro (PubMed:10022920, PubMed:15107860). Activated by guanine nucleotide-exchange factors (GEFs) and inactivated by GTPase-activating proteins (GAPs) (PubMed:10022920, PubMed:10102276, PubMed:15107860).</text>
</comment>
<comment type="subunit">
    <text evidence="1 4 5 6 8 10 11 13 15 16 19 22">Interacts (when activated) with GGA1, GGA2 and GGA3; the interaction is required for proper subcellular location of GGA1, GGA2 and GGA3 (PubMed:11950392, PubMed:28868155). Interacts with ARHGAP21, ASAP2, HERC1, PRKCABP, PIP5K1B, TMED2, PSCD2, TMED10 and GRIA2 (PubMed:10022920, PubMed:17347647, PubMed:23889934, PubMed:8861955). Interacts with ARFGAP1, which hydrolyzes GTP and thus, regulates its function (PubMed:10102276). Interacts with PI4KB in the Golgi complex (PubMed:17555535). Interacts with NCS1/FREQ in the Golgi and at the plasma membrane (PubMed:17555535). Interacts with PLEKHA3 (PubMed:21454700). Interacts with PLEKHA8; the interaction, together with phosphatidylinositol 4-phosphate binding, is required for FAPP2-mediated glucosylceramide transfer activity (PubMed:15107860). Interacts (activated) with PICK1 (via PDZ domain); the interaction blocks Arp2/3 complex inhibition (PubMed:23889934). Interacts with IQSEC1 (PubMed:24058294). Interacts with C9orf72 (By similarity) (PubMed:24058294).</text>
</comment>
<comment type="interaction">
    <interactant intactId="EBI-447171">
        <id>P84077</id>
    </interactant>
    <interactant intactId="EBI-2808808">
        <id>P53367</id>
        <label>ARFIP1</label>
    </interactant>
    <organismsDiffer>false</organismsDiffer>
    <experiments>2</experiments>
</comment>
<comment type="interaction">
    <interactant intactId="EBI-447171">
        <id>P84077</id>
    </interactant>
    <interactant intactId="EBI-638194">
        <id>P53365</id>
        <label>ARFIP2</label>
    </interactant>
    <organismsDiffer>false</organismsDiffer>
    <experiments>3</experiments>
</comment>
<comment type="interaction">
    <interactant intactId="EBI-447171">
        <id>P84077</id>
    </interactant>
    <interactant intactId="EBI-448974">
        <id>Q99418</id>
        <label>CYTH2</label>
    </interactant>
    <organismsDiffer>false</organismsDiffer>
    <experiments>5</experiments>
</comment>
<comment type="interaction">
    <interactant intactId="EBI-447171">
        <id>P84077</id>
    </interactant>
    <interactant intactId="EBI-297509">
        <id>P46940</id>
        <label>IQGAP1</label>
    </interactant>
    <organismsDiffer>false</organismsDiffer>
    <experiments>4</experiments>
</comment>
<comment type="interaction">
    <interactant intactId="EBI-447171">
        <id>P84077</id>
    </interactant>
    <interactant intactId="EBI-21502566">
        <id>O60271-2</id>
        <label>SPAG9</label>
    </interactant>
    <organismsDiffer>false</organismsDiffer>
    <experiments>3</experiments>
</comment>
<comment type="subcellular location">
    <subcellularLocation>
        <location evidence="11">Golgi apparatus membrane</location>
        <topology evidence="11">Lipid-anchor</topology>
        <orientation evidence="24">Cytoplasmic side</orientation>
    </subcellularLocation>
    <subcellularLocation>
        <location evidence="2">Synapse</location>
        <location evidence="2">Synaptosome</location>
    </subcellularLocation>
    <subcellularLocation>
        <location evidence="2">Postsynaptic density</location>
    </subcellularLocation>
    <text evidence="3">In the GDP-bound form, associates transiently with the membranes via its myristoylated N-terminus where guanine nucleotide-exchange factor (GEF)-mediated nucleotide exchange occurs (By similarity). Following nucleotide exchange, the GTP-bound form undergoes a conformational change, leading to the exposure of a myristoylated N-terminal amphipathic helix that provides stable membrane anchorage (By similarity).</text>
</comment>
<comment type="PTM">
    <text evidence="12 14">(Microbial infection) Demyristoylated by S.flexneri cysteine protease IpaJ which cleaves the peptide bond between N-myristoylated Gly-2 and Asn-3.</text>
</comment>
<comment type="disease" evidence="19">
    <disease id="DI-05385">
        <name>Periventricular nodular heterotopia 8</name>
        <acronym>PVNH8</acronym>
        <description>A form of periventricular nodular heterotopia, a disorder resulting from a defect in the pattern of neuronal migration in which ectopic collections of neurons lie along the lateral ventricles of the brain or just beneath, contiguously or in isolated patches. PVNH8 is an autosomal dominant disease characterized by developmental disabilities, speech delay, seizures and attention deficit-hyperactivity disorder.</description>
        <dbReference type="MIM" id="618185"/>
    </disease>
    <text>The disease is caused by variants affecting the gene represented in this entry.</text>
</comment>
<comment type="similarity">
    <text evidence="24">Belongs to the small GTPase superfamily. Arf family.</text>
</comment>
<proteinExistence type="evidence at protein level"/>
<organism>
    <name type="scientific">Homo sapiens</name>
    <name type="common">Human</name>
    <dbReference type="NCBI Taxonomy" id="9606"/>
    <lineage>
        <taxon>Eukaryota</taxon>
        <taxon>Metazoa</taxon>
        <taxon>Chordata</taxon>
        <taxon>Craniata</taxon>
        <taxon>Vertebrata</taxon>
        <taxon>Euteleostomi</taxon>
        <taxon>Mammalia</taxon>
        <taxon>Eutheria</taxon>
        <taxon>Euarchontoglires</taxon>
        <taxon>Primates</taxon>
        <taxon>Haplorrhini</taxon>
        <taxon>Catarrhini</taxon>
        <taxon>Hominidae</taxon>
        <taxon>Homo</taxon>
    </lineage>
</organism>